<gene>
    <name evidence="1" type="primary">purH</name>
    <name type="ordered locus">SeSA_A4387</name>
</gene>
<accession>B4TQL6</accession>
<sequence length="529" mass="57368">MQQRRPVRRALLSVSDKAGIIEFAQALSARGVELLSTGGTARLLAEKGLPVTEVSDYTGFPEMMDGRVKTLHPKVHGGILGRRGQDDAIMEQHHIAPIDMVVVNLYPFAETVARVGCSLEDAVENIDIGGPTMVRSAAKNHKDVAIVVKSSDYDAIIKEMDANEGSLTLDTRFDLAIKAFEHTAAYDSMIANYFGSMVPAYHGESKEAAGRFPRTLNLNFIKKQDMRYGENSHQQAAFYIEENVKEASVATAQQVQGKALSYNNIADTDAALECVKEFNEPACVIVKHANPCGVAVSTSILDAYDRAYKTDPTSAFGGIIAFNRELDAETAQAIISRQFVEVIIAPSASEEALKITAAKQNVRVLTCGQWASRVPGLDFKRVNGGLLVQDRDLGMVSEAELRVVSKRQPTEQELRDALFCWKVAKFVKSNAIVYAKENMTIGIGAGQMSRVYSAKIAGIKAADEGLEVKGSAMASDAFFPFRDGIDAAAAVGVSCVIQPGGSIRDDEVIAAADEHGIAMIFTDMRHFRH</sequence>
<protein>
    <recommendedName>
        <fullName evidence="1">Bifunctional purine biosynthesis protein PurH</fullName>
    </recommendedName>
    <domain>
        <recommendedName>
            <fullName evidence="1">Phosphoribosylaminoimidazolecarboxamide formyltransferase</fullName>
            <ecNumber evidence="1">2.1.2.3</ecNumber>
        </recommendedName>
        <alternativeName>
            <fullName evidence="1">AICAR transformylase</fullName>
        </alternativeName>
    </domain>
    <domain>
        <recommendedName>
            <fullName evidence="1">IMP cyclohydrolase</fullName>
            <ecNumber evidence="1">3.5.4.10</ecNumber>
        </recommendedName>
        <alternativeName>
            <fullName evidence="1">ATIC</fullName>
        </alternativeName>
        <alternativeName>
            <fullName evidence="1">IMP synthase</fullName>
        </alternativeName>
        <alternativeName>
            <fullName evidence="1">Inosinicase</fullName>
        </alternativeName>
    </domain>
</protein>
<keyword id="KW-0378">Hydrolase</keyword>
<keyword id="KW-0511">Multifunctional enzyme</keyword>
<keyword id="KW-0658">Purine biosynthesis</keyword>
<keyword id="KW-0808">Transferase</keyword>
<proteinExistence type="inferred from homology"/>
<feature type="chain" id="PRO_1000096095" description="Bifunctional purine biosynthesis protein PurH">
    <location>
        <begin position="1"/>
        <end position="529"/>
    </location>
</feature>
<feature type="domain" description="MGS-like" evidence="2">
    <location>
        <begin position="1"/>
        <end position="148"/>
    </location>
</feature>
<comment type="catalytic activity">
    <reaction evidence="1">
        <text>(6R)-10-formyltetrahydrofolate + 5-amino-1-(5-phospho-beta-D-ribosyl)imidazole-4-carboxamide = 5-formamido-1-(5-phospho-D-ribosyl)imidazole-4-carboxamide + (6S)-5,6,7,8-tetrahydrofolate</text>
        <dbReference type="Rhea" id="RHEA:22192"/>
        <dbReference type="ChEBI" id="CHEBI:57453"/>
        <dbReference type="ChEBI" id="CHEBI:58467"/>
        <dbReference type="ChEBI" id="CHEBI:58475"/>
        <dbReference type="ChEBI" id="CHEBI:195366"/>
        <dbReference type="EC" id="2.1.2.3"/>
    </reaction>
</comment>
<comment type="catalytic activity">
    <reaction evidence="1">
        <text>IMP + H2O = 5-formamido-1-(5-phospho-D-ribosyl)imidazole-4-carboxamide</text>
        <dbReference type="Rhea" id="RHEA:18445"/>
        <dbReference type="ChEBI" id="CHEBI:15377"/>
        <dbReference type="ChEBI" id="CHEBI:58053"/>
        <dbReference type="ChEBI" id="CHEBI:58467"/>
        <dbReference type="EC" id="3.5.4.10"/>
    </reaction>
</comment>
<comment type="pathway">
    <text evidence="1">Purine metabolism; IMP biosynthesis via de novo pathway; 5-formamido-1-(5-phospho-D-ribosyl)imidazole-4-carboxamide from 5-amino-1-(5-phospho-D-ribosyl)imidazole-4-carboxamide (10-formyl THF route): step 1/1.</text>
</comment>
<comment type="pathway">
    <text evidence="1">Purine metabolism; IMP biosynthesis via de novo pathway; IMP from 5-formamido-1-(5-phospho-D-ribosyl)imidazole-4-carboxamide: step 1/1.</text>
</comment>
<comment type="domain">
    <text evidence="1">The IMP cyclohydrolase activity resides in the N-terminal region.</text>
</comment>
<comment type="similarity">
    <text evidence="1">Belongs to the PurH family.</text>
</comment>
<dbReference type="EC" id="2.1.2.3" evidence="1"/>
<dbReference type="EC" id="3.5.4.10" evidence="1"/>
<dbReference type="EMBL" id="CP001127">
    <property type="protein sequence ID" value="ACF93080.1"/>
    <property type="molecule type" value="Genomic_DNA"/>
</dbReference>
<dbReference type="RefSeq" id="WP_001187520.1">
    <property type="nucleotide sequence ID" value="NC_011094.1"/>
</dbReference>
<dbReference type="SMR" id="B4TQL6"/>
<dbReference type="KEGG" id="sew:SeSA_A4387"/>
<dbReference type="HOGENOM" id="CLU_016316_5_2_6"/>
<dbReference type="UniPathway" id="UPA00074">
    <property type="reaction ID" value="UER00133"/>
</dbReference>
<dbReference type="UniPathway" id="UPA00074">
    <property type="reaction ID" value="UER00135"/>
</dbReference>
<dbReference type="Proteomes" id="UP000001865">
    <property type="component" value="Chromosome"/>
</dbReference>
<dbReference type="GO" id="GO:0005829">
    <property type="term" value="C:cytosol"/>
    <property type="evidence" value="ECO:0007669"/>
    <property type="project" value="TreeGrafter"/>
</dbReference>
<dbReference type="GO" id="GO:0003937">
    <property type="term" value="F:IMP cyclohydrolase activity"/>
    <property type="evidence" value="ECO:0007669"/>
    <property type="project" value="UniProtKB-UniRule"/>
</dbReference>
<dbReference type="GO" id="GO:0004643">
    <property type="term" value="F:phosphoribosylaminoimidazolecarboxamide formyltransferase activity"/>
    <property type="evidence" value="ECO:0007669"/>
    <property type="project" value="UniProtKB-UniRule"/>
</dbReference>
<dbReference type="GO" id="GO:0006189">
    <property type="term" value="P:'de novo' IMP biosynthetic process"/>
    <property type="evidence" value="ECO:0007669"/>
    <property type="project" value="UniProtKB-UniRule"/>
</dbReference>
<dbReference type="CDD" id="cd01421">
    <property type="entry name" value="IMPCH"/>
    <property type="match status" value="1"/>
</dbReference>
<dbReference type="FunFam" id="3.40.140.20:FF:000001">
    <property type="entry name" value="Bifunctional purine biosynthesis protein PurH"/>
    <property type="match status" value="1"/>
</dbReference>
<dbReference type="FunFam" id="3.40.140.20:FF:000002">
    <property type="entry name" value="Bifunctional purine biosynthesis protein PurH"/>
    <property type="match status" value="1"/>
</dbReference>
<dbReference type="FunFam" id="3.40.50.1380:FF:000001">
    <property type="entry name" value="Bifunctional purine biosynthesis protein PurH"/>
    <property type="match status" value="1"/>
</dbReference>
<dbReference type="Gene3D" id="3.40.140.20">
    <property type="match status" value="2"/>
</dbReference>
<dbReference type="Gene3D" id="3.40.50.1380">
    <property type="entry name" value="Methylglyoxal synthase-like domain"/>
    <property type="match status" value="1"/>
</dbReference>
<dbReference type="HAMAP" id="MF_00139">
    <property type="entry name" value="PurH"/>
    <property type="match status" value="1"/>
</dbReference>
<dbReference type="InterPro" id="IPR024051">
    <property type="entry name" value="AICAR_Tfase_dup_dom_sf"/>
</dbReference>
<dbReference type="InterPro" id="IPR016193">
    <property type="entry name" value="Cytidine_deaminase-like"/>
</dbReference>
<dbReference type="InterPro" id="IPR011607">
    <property type="entry name" value="MGS-like_dom"/>
</dbReference>
<dbReference type="InterPro" id="IPR036914">
    <property type="entry name" value="MGS-like_dom_sf"/>
</dbReference>
<dbReference type="InterPro" id="IPR002695">
    <property type="entry name" value="PurH-like"/>
</dbReference>
<dbReference type="NCBIfam" id="NF002049">
    <property type="entry name" value="PRK00881.1"/>
    <property type="match status" value="1"/>
</dbReference>
<dbReference type="NCBIfam" id="TIGR00355">
    <property type="entry name" value="purH"/>
    <property type="match status" value="1"/>
</dbReference>
<dbReference type="PANTHER" id="PTHR11692:SF0">
    <property type="entry name" value="BIFUNCTIONAL PURINE BIOSYNTHESIS PROTEIN ATIC"/>
    <property type="match status" value="1"/>
</dbReference>
<dbReference type="PANTHER" id="PTHR11692">
    <property type="entry name" value="BIFUNCTIONAL PURINE BIOSYNTHESIS PROTEIN PURH"/>
    <property type="match status" value="1"/>
</dbReference>
<dbReference type="Pfam" id="PF01808">
    <property type="entry name" value="AICARFT_IMPCHas"/>
    <property type="match status" value="1"/>
</dbReference>
<dbReference type="Pfam" id="PF02142">
    <property type="entry name" value="MGS"/>
    <property type="match status" value="1"/>
</dbReference>
<dbReference type="PIRSF" id="PIRSF000414">
    <property type="entry name" value="AICARFT_IMPCHas"/>
    <property type="match status" value="1"/>
</dbReference>
<dbReference type="SMART" id="SM00798">
    <property type="entry name" value="AICARFT_IMPCHas"/>
    <property type="match status" value="1"/>
</dbReference>
<dbReference type="SMART" id="SM00851">
    <property type="entry name" value="MGS"/>
    <property type="match status" value="1"/>
</dbReference>
<dbReference type="SUPFAM" id="SSF53927">
    <property type="entry name" value="Cytidine deaminase-like"/>
    <property type="match status" value="1"/>
</dbReference>
<dbReference type="SUPFAM" id="SSF52335">
    <property type="entry name" value="Methylglyoxal synthase-like"/>
    <property type="match status" value="1"/>
</dbReference>
<dbReference type="PROSITE" id="PS51855">
    <property type="entry name" value="MGS"/>
    <property type="match status" value="1"/>
</dbReference>
<reference key="1">
    <citation type="journal article" date="2011" name="J. Bacteriol.">
        <title>Comparative genomics of 28 Salmonella enterica isolates: evidence for CRISPR-mediated adaptive sublineage evolution.</title>
        <authorList>
            <person name="Fricke W.F."/>
            <person name="Mammel M.K."/>
            <person name="McDermott P.F."/>
            <person name="Tartera C."/>
            <person name="White D.G."/>
            <person name="Leclerc J.E."/>
            <person name="Ravel J."/>
            <person name="Cebula T.A."/>
        </authorList>
    </citation>
    <scope>NUCLEOTIDE SEQUENCE [LARGE SCALE GENOMIC DNA]</scope>
    <source>
        <strain>CVM19633</strain>
    </source>
</reference>
<evidence type="ECO:0000255" key="1">
    <source>
        <dbReference type="HAMAP-Rule" id="MF_00139"/>
    </source>
</evidence>
<evidence type="ECO:0000255" key="2">
    <source>
        <dbReference type="PROSITE-ProRule" id="PRU01202"/>
    </source>
</evidence>
<name>PUR9_SALSV</name>
<organism>
    <name type="scientific">Salmonella schwarzengrund (strain CVM19633)</name>
    <dbReference type="NCBI Taxonomy" id="439843"/>
    <lineage>
        <taxon>Bacteria</taxon>
        <taxon>Pseudomonadati</taxon>
        <taxon>Pseudomonadota</taxon>
        <taxon>Gammaproteobacteria</taxon>
        <taxon>Enterobacterales</taxon>
        <taxon>Enterobacteriaceae</taxon>
        <taxon>Salmonella</taxon>
    </lineage>
</organism>